<protein>
    <recommendedName>
        <fullName evidence="8">FAD-dependent monooxygenase fmqB</fullName>
        <ecNumber evidence="4">1.-.-.-</ecNumber>
    </recommendedName>
    <alternativeName>
        <fullName evidence="9">Fumiquinazoline biosynthesis cluster protein B</fullName>
    </alternativeName>
</protein>
<gene>
    <name evidence="9" type="primary">fmqB</name>
    <name type="ORF">AFUA_6G12060</name>
</gene>
<organism>
    <name type="scientific">Aspergillus fumigatus (strain ATCC MYA-4609 / CBS 101355 / FGSC A1100 / Af293)</name>
    <name type="common">Neosartorya fumigata</name>
    <dbReference type="NCBI Taxonomy" id="330879"/>
    <lineage>
        <taxon>Eukaryota</taxon>
        <taxon>Fungi</taxon>
        <taxon>Dikarya</taxon>
        <taxon>Ascomycota</taxon>
        <taxon>Pezizomycotina</taxon>
        <taxon>Eurotiomycetes</taxon>
        <taxon>Eurotiomycetidae</taxon>
        <taxon>Eurotiales</taxon>
        <taxon>Aspergillaceae</taxon>
        <taxon>Aspergillus</taxon>
        <taxon>Aspergillus subgen. Fumigati</taxon>
    </lineage>
</organism>
<reference key="1">
    <citation type="journal article" date="2005" name="Nature">
        <title>Genomic sequence of the pathogenic and allergenic filamentous fungus Aspergillus fumigatus.</title>
        <authorList>
            <person name="Nierman W.C."/>
            <person name="Pain A."/>
            <person name="Anderson M.J."/>
            <person name="Wortman J.R."/>
            <person name="Kim H.S."/>
            <person name="Arroyo J."/>
            <person name="Berriman M."/>
            <person name="Abe K."/>
            <person name="Archer D.B."/>
            <person name="Bermejo C."/>
            <person name="Bennett J.W."/>
            <person name="Bowyer P."/>
            <person name="Chen D."/>
            <person name="Collins M."/>
            <person name="Coulsen R."/>
            <person name="Davies R."/>
            <person name="Dyer P.S."/>
            <person name="Farman M.L."/>
            <person name="Fedorova N."/>
            <person name="Fedorova N.D."/>
            <person name="Feldblyum T.V."/>
            <person name="Fischer R."/>
            <person name="Fosker N."/>
            <person name="Fraser A."/>
            <person name="Garcia J.L."/>
            <person name="Garcia M.J."/>
            <person name="Goble A."/>
            <person name="Goldman G.H."/>
            <person name="Gomi K."/>
            <person name="Griffith-Jones S."/>
            <person name="Gwilliam R."/>
            <person name="Haas B.J."/>
            <person name="Haas H."/>
            <person name="Harris D.E."/>
            <person name="Horiuchi H."/>
            <person name="Huang J."/>
            <person name="Humphray S."/>
            <person name="Jimenez J."/>
            <person name="Keller N."/>
            <person name="Khouri H."/>
            <person name="Kitamoto K."/>
            <person name="Kobayashi T."/>
            <person name="Konzack S."/>
            <person name="Kulkarni R."/>
            <person name="Kumagai T."/>
            <person name="Lafton A."/>
            <person name="Latge J.-P."/>
            <person name="Li W."/>
            <person name="Lord A."/>
            <person name="Lu C."/>
            <person name="Majoros W.H."/>
            <person name="May G.S."/>
            <person name="Miller B.L."/>
            <person name="Mohamoud Y."/>
            <person name="Molina M."/>
            <person name="Monod M."/>
            <person name="Mouyna I."/>
            <person name="Mulligan S."/>
            <person name="Murphy L.D."/>
            <person name="O'Neil S."/>
            <person name="Paulsen I."/>
            <person name="Penalva M.A."/>
            <person name="Pertea M."/>
            <person name="Price C."/>
            <person name="Pritchard B.L."/>
            <person name="Quail M.A."/>
            <person name="Rabbinowitsch E."/>
            <person name="Rawlins N."/>
            <person name="Rajandream M.A."/>
            <person name="Reichard U."/>
            <person name="Renauld H."/>
            <person name="Robson G.D."/>
            <person name="Rodriguez de Cordoba S."/>
            <person name="Rodriguez-Pena J.M."/>
            <person name="Ronning C.M."/>
            <person name="Rutter S."/>
            <person name="Salzberg S.L."/>
            <person name="Sanchez M."/>
            <person name="Sanchez-Ferrero J.C."/>
            <person name="Saunders D."/>
            <person name="Seeger K."/>
            <person name="Squares R."/>
            <person name="Squares S."/>
            <person name="Takeuchi M."/>
            <person name="Tekaia F."/>
            <person name="Turner G."/>
            <person name="Vazquez de Aldana C.R."/>
            <person name="Weidman J."/>
            <person name="White O."/>
            <person name="Woodward J.R."/>
            <person name="Yu J.-H."/>
            <person name="Fraser C.M."/>
            <person name="Galagan J.E."/>
            <person name="Asai K."/>
            <person name="Machida M."/>
            <person name="Hall N."/>
            <person name="Barrell B.G."/>
            <person name="Denning D.W."/>
        </authorList>
    </citation>
    <scope>NUCLEOTIDE SEQUENCE [LARGE SCALE GENOMIC DNA]</scope>
    <source>
        <strain>ATCC MYA-4609 / CBS 101355 / FGSC A1100 / Af293</strain>
    </source>
</reference>
<reference key="2">
    <citation type="journal article" date="2010" name="Biochemistry">
        <title>Anthranilate-activating modules from fungal nonribosomal peptide assembly lines.</title>
        <authorList>
            <person name="Ames B.D."/>
            <person name="Walsh C.T."/>
        </authorList>
    </citation>
    <scope>FUNCTION</scope>
</reference>
<reference key="3">
    <citation type="journal article" date="2010" name="Biochemistry">
        <title>Enzymatic processing of fumiquinazoline F: a tandem oxidative-acylation strategy for the generation of multicyclic scaffolds in fungal indole alkaloid biosynthesis.</title>
        <authorList>
            <person name="Ames B.D."/>
            <person name="Liu X."/>
            <person name="Walsh C.T."/>
        </authorList>
    </citation>
    <scope>FUNCTION</scope>
    <scope>CATALYTIC ACTIVITY</scope>
    <scope>PATHWAY</scope>
</reference>
<reference key="4">
    <citation type="journal article" date="2011" name="Biochemistry">
        <title>Complexity generation in fungal peptidyl alkaloid biosynthesis: oxidation of fumiquinazoline A to the heptacyclic hemiaminal fumiquinazoline C by the flavoenzyme Af12070 from Aspergillus fumigatus.</title>
        <authorList>
            <person name="Ames B.D."/>
            <person name="Haynes S.W."/>
            <person name="Gao X."/>
            <person name="Evans B.S."/>
            <person name="Kelleher N.L."/>
            <person name="Tang Y."/>
            <person name="Walsh C.T."/>
        </authorList>
    </citation>
    <scope>FUNCTION</scope>
</reference>
<reference key="5">
    <citation type="journal article" date="2014" name="Cell. Microbiol.">
        <title>Co-ordination between BrlA regulation and secretion of the oxidoreductase FmqD directs selective accumulation of fumiquinazoline C to conidial tissues in Aspergillus fumigatus.</title>
        <authorList>
            <person name="Lim F.Y."/>
            <person name="Ames B."/>
            <person name="Walsh C.T."/>
            <person name="Keller N.P."/>
        </authorList>
    </citation>
    <scope>FUNCTION</scope>
    <scope>DISRUPTION PHENOTYPE</scope>
    <scope>INDUCTION</scope>
    <scope>SUBCELLULAR LOCATION</scope>
    <scope>PATHWAY</scope>
</reference>
<reference key="6">
    <citation type="journal article" date="2021" name="Genetics">
        <title>Transcriptional control of the production of Aspergillus fumigatus conidia-borne secondary metabolite fumiquinazoline C important for phagocytosis protection.</title>
        <authorList>
            <person name="Rocha M.C."/>
            <person name="Fabri J.H.T.M."/>
            <person name="da Silva L.P."/>
            <person name="Angolini C.F.F."/>
            <person name="Bertolini M.C."/>
            <person name="da Cunha A.F."/>
            <person name="Valiante V."/>
            <person name="Goldman G.H."/>
            <person name="Fill T.P."/>
            <person name="Malavazi I."/>
        </authorList>
    </citation>
    <scope>FUNCTION</scope>
    <scope>INDUCTION</scope>
</reference>
<dbReference type="EC" id="1.-.-.-" evidence="4"/>
<dbReference type="EMBL" id="AAHF01000006">
    <property type="protein sequence ID" value="EAL89047.1"/>
    <property type="molecule type" value="Genomic_DNA"/>
</dbReference>
<dbReference type="RefSeq" id="XP_751085.1">
    <property type="nucleotide sequence ID" value="XM_745992.1"/>
</dbReference>
<dbReference type="SMR" id="Q4WLW7"/>
<dbReference type="STRING" id="330879.Q4WLW7"/>
<dbReference type="EnsemblFungi" id="EAL89047">
    <property type="protein sequence ID" value="EAL89047"/>
    <property type="gene ID" value="AFUA_6G12060"/>
</dbReference>
<dbReference type="GeneID" id="3508390"/>
<dbReference type="KEGG" id="afm:AFUA_6G12060"/>
<dbReference type="eggNOG" id="KOG2614">
    <property type="taxonomic scope" value="Eukaryota"/>
</dbReference>
<dbReference type="HOGENOM" id="CLU_009665_19_1_1"/>
<dbReference type="InParanoid" id="Q4WLW7"/>
<dbReference type="OMA" id="ADCVICA"/>
<dbReference type="OrthoDB" id="16820at2759"/>
<dbReference type="BioCyc" id="MetaCyc:MONOMER-18828"/>
<dbReference type="Proteomes" id="UP000002530">
    <property type="component" value="Chromosome 6"/>
</dbReference>
<dbReference type="GO" id="GO:0005737">
    <property type="term" value="C:cytoplasm"/>
    <property type="evidence" value="ECO:0007669"/>
    <property type="project" value="UniProtKB-SubCell"/>
</dbReference>
<dbReference type="GO" id="GO:0071949">
    <property type="term" value="F:FAD binding"/>
    <property type="evidence" value="ECO:0007669"/>
    <property type="project" value="InterPro"/>
</dbReference>
<dbReference type="GO" id="GO:0004497">
    <property type="term" value="F:monooxygenase activity"/>
    <property type="evidence" value="ECO:0000318"/>
    <property type="project" value="GO_Central"/>
</dbReference>
<dbReference type="GO" id="GO:1900781">
    <property type="term" value="P:fumiquinazoline C biosynthetic process"/>
    <property type="evidence" value="ECO:0000314"/>
    <property type="project" value="GO_Central"/>
</dbReference>
<dbReference type="Gene3D" id="3.50.50.60">
    <property type="entry name" value="FAD/NAD(P)-binding domain"/>
    <property type="match status" value="1"/>
</dbReference>
<dbReference type="InterPro" id="IPR002938">
    <property type="entry name" value="FAD-bd"/>
</dbReference>
<dbReference type="InterPro" id="IPR050493">
    <property type="entry name" value="FAD-dep_Monooxygenase_BioMet"/>
</dbReference>
<dbReference type="InterPro" id="IPR036188">
    <property type="entry name" value="FAD/NAD-bd_sf"/>
</dbReference>
<dbReference type="PANTHER" id="PTHR13789">
    <property type="entry name" value="MONOOXYGENASE"/>
    <property type="match status" value="1"/>
</dbReference>
<dbReference type="PANTHER" id="PTHR13789:SF236">
    <property type="entry name" value="MONOOXYGENASE, PUTATIVE (AFU_ORTHOLOGUE AFUA_6G12060)-RELATED"/>
    <property type="match status" value="1"/>
</dbReference>
<dbReference type="Pfam" id="PF01494">
    <property type="entry name" value="FAD_binding_3"/>
    <property type="match status" value="2"/>
</dbReference>
<dbReference type="PRINTS" id="PR00420">
    <property type="entry name" value="RNGMNOXGNASE"/>
</dbReference>
<dbReference type="SUPFAM" id="SSF51905">
    <property type="entry name" value="FAD/NAD(P)-binding domain"/>
    <property type="match status" value="1"/>
</dbReference>
<proteinExistence type="evidence at protein level"/>
<accession>Q4WLW7</accession>
<evidence type="ECO:0000250" key="1">
    <source>
        <dbReference type="UniProtKB" id="B8M9J8"/>
    </source>
</evidence>
<evidence type="ECO:0000250" key="2">
    <source>
        <dbReference type="UniProtKB" id="L0E4H0"/>
    </source>
</evidence>
<evidence type="ECO:0000269" key="3">
    <source>
    </source>
</evidence>
<evidence type="ECO:0000269" key="4">
    <source>
    </source>
</evidence>
<evidence type="ECO:0000269" key="5">
    <source>
    </source>
</evidence>
<evidence type="ECO:0000269" key="6">
    <source>
    </source>
</evidence>
<evidence type="ECO:0000269" key="7">
    <source>
    </source>
</evidence>
<evidence type="ECO:0000303" key="8">
    <source>
    </source>
</evidence>
<evidence type="ECO:0000303" key="9">
    <source>
    </source>
</evidence>
<evidence type="ECO:0000305" key="10"/>
<feature type="chain" id="PRO_0000444452" description="FAD-dependent monooxygenase fmqB">
    <location>
        <begin position="1"/>
        <end position="418"/>
    </location>
</feature>
<feature type="active site" evidence="2">
    <location>
        <position position="147"/>
    </location>
</feature>
<feature type="binding site" evidence="1">
    <location>
        <position position="12"/>
    </location>
    <ligand>
        <name>FAD</name>
        <dbReference type="ChEBI" id="CHEBI:57692"/>
    </ligand>
</feature>
<feature type="binding site" evidence="1">
    <location>
        <position position="68"/>
    </location>
    <ligand>
        <name>FAD</name>
        <dbReference type="ChEBI" id="CHEBI:57692"/>
    </ligand>
</feature>
<feature type="binding site" evidence="1">
    <location>
        <position position="272"/>
    </location>
    <ligand>
        <name>FAD</name>
        <dbReference type="ChEBI" id="CHEBI:57692"/>
    </ligand>
</feature>
<feature type="binding site" evidence="1">
    <location>
        <position position="285"/>
    </location>
    <ligand>
        <name>FAD</name>
        <dbReference type="ChEBI" id="CHEBI:57692"/>
    </ligand>
</feature>
<name>FMQB_ASPFU</name>
<sequence length="418" mass="46550">MKLPAAAGDAIVIGPNAVRLIKSWGEQLCEEIEPHLSNATHAEMLDHHDRFIVRHELAGRGKGWFTNRGRLISILYEHARKLGIDIRLGSRVTKYWEEDGRAGVIVNDRERLAADCVICADGVHSAARAWLTGQVDTQQHSGWANFRAHMTTEQLAKDPEASWVLQGTREKDRVYVWFGDGINLAIMTMKRGQELAWALMHTDKFNAHESWAGGRASIDDALATLSPWPGRLRPSSVIRHTLPEKLVDHALIYRPPLDTWVSAGGRVMLIGDAAHPYFPVVGQGGSQAIEDGVVVATALELAGKENVPLALRIRATLTEENNVLMEAGNSRYPRATVIQLGSSTLQEHLFWPDWEAVAKDPSVFAFPNPEWILGHDCREYTHQVFDTVVRAVRGEGEYIPRNIPADGAYRVEDTYSPE</sequence>
<keyword id="KW-0963">Cytoplasm</keyword>
<keyword id="KW-0274">FAD</keyword>
<keyword id="KW-0285">Flavoprotein</keyword>
<keyword id="KW-0503">Monooxygenase</keyword>
<keyword id="KW-0560">Oxidoreductase</keyword>
<keyword id="KW-1185">Reference proteome</keyword>
<comment type="function">
    <text evidence="3 4 5 6 7">FAD-dependent monooxygenase; part of the gene cluster that mediates the biosynthesis of the antitumor fumiquinazolines that confer a dual-usage capability to defend against phagocytes in the environment and animal hosts (PubMed:20225828, PubMed:20804163, PubMed:21899262, PubMed:24612080, PubMed:33705521). The simplest member is fumiquinazoline F (FQF) with a 6-6-6 tricyclic core derived from anthranilic acid (Ant), tryptophan (Trp), and alanine (Ala) (PubMed:20225828). The trimodular NRPS fmqA is responsible for FQF formation (PubMed:20225828). Modules 1, 2 and 3 of fmqA are predicted to activate and load Ant, Trp and Ala, respectively, providing for the assembly of an Ant-Trp-Ala-S-enzyme intermediate that would undergo double cyclization for chain release and generation of the tricyclic 6-6-6 product fumiquinazoline F (PubMed:20225828). The presence of an E domain predicted for module 2 of fmqA is consistent with epimerization of L-Trp to D-Trp during assembly to generate the R-stereocenter at C14 of FQF (PubMed:20225828). The FAD-dependent monooxygenase fmqB and the monomodular NRPS fmqC then maturate FQF to FQA (PubMed:20804163). FmqB oxidizes the 2',3'-double bond of the indole side chain of FQF, and fmqC activates L-Ala as the adenylate, installs it as the pantetheinyl thioester on its carrier protein domain, and acylates the oxidized indole for subsequent intramolecular cyclization to create the 6-5-5-imidazolindolone of FQA (PubMed:20804163). The FAD-linked oxidoreductase fmqD introduces a third layer of scaffold complexity by converting FQA to the spirohemiaminal FQC, presumably by catalyzing the formation of a transient imine within the pyrazinone ring (PubMed:21899262). FQC subsequently converts nonenzymatically to the known cyclic aminal FQD (PubMed:21899262).</text>
</comment>
<comment type="pathway">
    <text evidence="4 6">Alkaloid biosynthesis.</text>
</comment>
<comment type="subcellular location">
    <subcellularLocation>
        <location evidence="6">Cytoplasm</location>
    </subcellularLocation>
</comment>
<comment type="induction">
    <text evidence="6 7">Expression is positively regulated by brlA, a conidiation-specific transcription factor involved in the early stage of asexual development and necessary for conidiophore formation (PubMed:24612080). Expression is also induced by the cell wall integrity (CWI) signaling pathway that includes the mitogen-activated protein kinase mpkA and the transcription factor rlmA (PubMed:33705521). Expression is negatively regulated by the transcription factor sebA (PubMed:33705521).</text>
</comment>
<comment type="disruption phenotype">
    <text evidence="6">Abolishes the production of fumiquinazoline A and C and shows a 19-fold accumulation in fumiquinazoline F production (PubMed:24612080).</text>
</comment>
<comment type="similarity">
    <text evidence="10">Belongs to the paxM FAD-dependent monooxygenase family.</text>
</comment>